<sequence>MIRHAGAPARGDPTGPVPVVGKGEEEEEEDGMRLCLPANPKNCLPHRRGISILEKLIKTCPVWLQLSLGQAEVARILHRVVAGMFLVRRDSSSKQLVLCVHFPSLNESSAEVLEYTIKEEKSILYLEGSALVFEDIFRLIAFYCVSRDLLPFTLRLPQAILEASSFTDLETIANLGLGFWDSSLNPPQERGKPAEPPRDRAPGFPLVSSLRPTAHDANCACEIELSVGNDRLWFVNPIFIEDCSSALPTDQPPLGNCPARPLPPTSDATSPTSRWAPRRPPPPPPVLPLQPCSPAQPPVLPALAPAPACPLPTSPPVPAPHVTPHAPGPPDHPNQPPMMTCERLPCPTAGLGPLREEAMKPGAASSPLQQVPAPPLPAKKNLPTAPPRRRVSERVSLEDQSPGMAAEGDQLSLPPQGTSDGPEDTPRESTEQGQDTEVKASDPHSMPELPRTAKQPPVPPPRKKRISRQLASTLPAPLENAELCTQAMALETPTPGPPREGQSPASQAGTQHPPAQATAHSQSSPEFKGSLASLSDSLGVSVMATDQDSYSTSSTEEELEQFSSPSVKKKPSMILGKARHRLSFASFSSMFHAFLSNNRKLYKKVVELAQDKGSYFGSLVQDYKVYSLEMMARQTSSTEMLQEIRTMMTQLKSYLLQSTELKALVDPALHSEEELEAIVESALYKCVLKPLKEAINSCLHQIHSKDGSLQQLKENQLVILATTTTDLGVTTSVPEVPMMEKILQKFTSMHKAYSPEKKISILLKTCKLIYDSMALGNPGKPYGADDFLPVLMYVLARSNLTEMLLNVEYMMELMDPALQLGEGSYYLTTTYGALEHIKSYDKITVTRQLSVEVQDSIHRWERRRTLNKARASRSSVQDFICVSYLEPEQQARTLASRADTQAQALCAQCAEKFAVERPQAHRLFVLVDGRCFQLADDALPHCIKGYLLRSEPKRDFHFVYRPLDGGGGGGGGSPPCLVVREPNFL</sequence>
<organism>
    <name type="scientific">Homo sapiens</name>
    <name type="common">Human</name>
    <dbReference type="NCBI Taxonomy" id="9606"/>
    <lineage>
        <taxon>Eukaryota</taxon>
        <taxon>Metazoa</taxon>
        <taxon>Chordata</taxon>
        <taxon>Craniata</taxon>
        <taxon>Vertebrata</taxon>
        <taxon>Euteleostomi</taxon>
        <taxon>Mammalia</taxon>
        <taxon>Eutheria</taxon>
        <taxon>Euarchontoglires</taxon>
        <taxon>Primates</taxon>
        <taxon>Haplorrhini</taxon>
        <taxon>Catarrhini</taxon>
        <taxon>Hominidae</taxon>
        <taxon>Homo</taxon>
    </lineage>
</organism>
<keyword id="KW-0002">3D-structure</keyword>
<keyword id="KW-0025">Alternative splicing</keyword>
<keyword id="KW-0963">Cytoplasm</keyword>
<keyword id="KW-0968">Cytoplasmic vesicle</keyword>
<keyword id="KW-0967">Endosome</keyword>
<keyword id="KW-0343">GTPase activation</keyword>
<keyword id="KW-1267">Proteomics identification</keyword>
<keyword id="KW-1185">Reference proteome</keyword>
<keyword id="KW-0727">SH2 domain</keyword>
<dbReference type="EMBL" id="AB081753">
    <property type="protein sequence ID" value="BAC16513.1"/>
    <property type="molecule type" value="mRNA"/>
</dbReference>
<dbReference type="EMBL" id="AL136332">
    <property type="status" value="NOT_ANNOTATED_CDS"/>
    <property type="molecule type" value="Genomic_DNA"/>
</dbReference>
<dbReference type="EMBL" id="AL159141">
    <property type="status" value="NOT_ANNOTATED_CDS"/>
    <property type="molecule type" value="Genomic_DNA"/>
</dbReference>
<dbReference type="EMBL" id="AK021762">
    <property type="protein sequence ID" value="BAB13888.1"/>
    <property type="status" value="ALT_SEQ"/>
    <property type="molecule type" value="mRNA"/>
</dbReference>
<dbReference type="EMBL" id="AK026092">
    <property type="protein sequence ID" value="BAB15357.1"/>
    <property type="status" value="ALT_INIT"/>
    <property type="molecule type" value="mRNA"/>
</dbReference>
<dbReference type="EMBL" id="AK074176">
    <property type="protein sequence ID" value="BAB85002.1"/>
    <property type="molecule type" value="mRNA"/>
</dbReference>
<dbReference type="EMBL" id="AK090451">
    <property type="protein sequence ID" value="BAC03432.1"/>
    <property type="status" value="ALT_SEQ"/>
    <property type="molecule type" value="mRNA"/>
</dbReference>
<dbReference type="EMBL" id="BC025248">
    <property type="protein sequence ID" value="AAH25248.2"/>
    <property type="molecule type" value="mRNA"/>
</dbReference>
<dbReference type="EMBL" id="AB060338">
    <property type="protein sequence ID" value="BAB84316.1"/>
    <property type="molecule type" value="mRNA"/>
</dbReference>
<dbReference type="CCDS" id="CCDS32144.1">
    <molecule id="Q8TB24-1"/>
</dbReference>
<dbReference type="PIR" id="T50623">
    <property type="entry name" value="T50623"/>
</dbReference>
<dbReference type="RefSeq" id="NP_001306916.1">
    <property type="nucleotide sequence ID" value="NM_001319987.1"/>
</dbReference>
<dbReference type="RefSeq" id="NP_079108.3">
    <molecule id="Q8TB24-1"/>
    <property type="nucleotide sequence ID" value="NM_024832.4"/>
</dbReference>
<dbReference type="PDB" id="3U23">
    <property type="method" value="X-ray"/>
    <property type="resolution" value="1.11 A"/>
    <property type="chains" value="B=452-467"/>
</dbReference>
<dbReference type="PDB" id="4WCI">
    <property type="method" value="X-ray"/>
    <property type="resolution" value="1.65 A"/>
    <property type="chains" value="B/D/F=378-393"/>
</dbReference>
<dbReference type="PDBsum" id="3U23"/>
<dbReference type="PDBsum" id="4WCI"/>
<dbReference type="SMR" id="Q8TB24"/>
<dbReference type="BioGRID" id="122974">
    <property type="interactions" value="459"/>
</dbReference>
<dbReference type="FunCoup" id="Q8TB24">
    <property type="interactions" value="637"/>
</dbReference>
<dbReference type="IntAct" id="Q8TB24">
    <property type="interactions" value="417"/>
</dbReference>
<dbReference type="MINT" id="Q8TB24"/>
<dbReference type="STRING" id="9606.ENSP00000216487"/>
<dbReference type="MoonDB" id="Q8TB24">
    <property type="type" value="Predicted"/>
</dbReference>
<dbReference type="GlyGen" id="Q8TB24">
    <property type="glycosylation" value="2 sites"/>
</dbReference>
<dbReference type="iPTMnet" id="Q8TB24"/>
<dbReference type="PhosphoSitePlus" id="Q8TB24"/>
<dbReference type="BioMuta" id="RIN3"/>
<dbReference type="DMDM" id="209572780"/>
<dbReference type="jPOST" id="Q8TB24"/>
<dbReference type="MassIVE" id="Q8TB24"/>
<dbReference type="PaxDb" id="9606-ENSP00000216487"/>
<dbReference type="PeptideAtlas" id="Q8TB24"/>
<dbReference type="ProteomicsDB" id="73951">
    <molecule id="Q8TB24-1"/>
</dbReference>
<dbReference type="ProteomicsDB" id="73952">
    <molecule id="Q8TB24-4"/>
</dbReference>
<dbReference type="Pumba" id="Q8TB24"/>
<dbReference type="Antibodypedia" id="26773">
    <property type="antibodies" value="83 antibodies from 23 providers"/>
</dbReference>
<dbReference type="DNASU" id="79890"/>
<dbReference type="Ensembl" id="ENST00000216487.12">
    <molecule id="Q8TB24-1"/>
    <property type="protein sequence ID" value="ENSP00000216487.7"/>
    <property type="gene ID" value="ENSG00000100599.16"/>
</dbReference>
<dbReference type="GeneID" id="79890"/>
<dbReference type="KEGG" id="hsa:79890"/>
<dbReference type="MANE-Select" id="ENST00000216487.12">
    <property type="protein sequence ID" value="ENSP00000216487.7"/>
    <property type="RefSeq nucleotide sequence ID" value="NM_024832.5"/>
    <property type="RefSeq protein sequence ID" value="NP_079108.3"/>
</dbReference>
<dbReference type="UCSC" id="uc001yap.4">
    <molecule id="Q8TB24-1"/>
    <property type="organism name" value="human"/>
</dbReference>
<dbReference type="AGR" id="HGNC:18751"/>
<dbReference type="CTD" id="79890"/>
<dbReference type="DisGeNET" id="79890"/>
<dbReference type="GeneCards" id="RIN3"/>
<dbReference type="HGNC" id="HGNC:18751">
    <property type="gene designation" value="RIN3"/>
</dbReference>
<dbReference type="HPA" id="ENSG00000100599">
    <property type="expression patterns" value="Tissue enhanced (bone)"/>
</dbReference>
<dbReference type="MIM" id="610223">
    <property type="type" value="gene"/>
</dbReference>
<dbReference type="neXtProt" id="NX_Q8TB24"/>
<dbReference type="OpenTargets" id="ENSG00000100599"/>
<dbReference type="PharmGKB" id="PA38673"/>
<dbReference type="VEuPathDB" id="HostDB:ENSG00000100599"/>
<dbReference type="eggNOG" id="KOG2320">
    <property type="taxonomic scope" value="Eukaryota"/>
</dbReference>
<dbReference type="GeneTree" id="ENSGT00940000158622"/>
<dbReference type="InParanoid" id="Q8TB24"/>
<dbReference type="OMA" id="RFEQDSY"/>
<dbReference type="OrthoDB" id="21085at2759"/>
<dbReference type="PAN-GO" id="Q8TB24">
    <property type="GO annotations" value="4 GO annotations based on evolutionary models"/>
</dbReference>
<dbReference type="PhylomeDB" id="Q8TB24"/>
<dbReference type="TreeFam" id="TF331067"/>
<dbReference type="PathwayCommons" id="Q8TB24"/>
<dbReference type="Reactome" id="R-HSA-8876198">
    <property type="pathway name" value="RAB GEFs exchange GTP for GDP on RABs"/>
</dbReference>
<dbReference type="SignaLink" id="Q8TB24"/>
<dbReference type="BioGRID-ORCS" id="79890">
    <property type="hits" value="14 hits in 1148 CRISPR screens"/>
</dbReference>
<dbReference type="ChiTaRS" id="RIN3">
    <property type="organism name" value="human"/>
</dbReference>
<dbReference type="EvolutionaryTrace" id="Q8TB24"/>
<dbReference type="GenomeRNAi" id="79890"/>
<dbReference type="Pharos" id="Q8TB24">
    <property type="development level" value="Tbio"/>
</dbReference>
<dbReference type="PRO" id="PR:Q8TB24"/>
<dbReference type="Proteomes" id="UP000005640">
    <property type="component" value="Chromosome 14"/>
</dbReference>
<dbReference type="RNAct" id="Q8TB24">
    <property type="molecule type" value="protein"/>
</dbReference>
<dbReference type="Bgee" id="ENSG00000100599">
    <property type="expression patterns" value="Expressed in granulocyte and 135 other cell types or tissues"/>
</dbReference>
<dbReference type="ExpressionAtlas" id="Q8TB24">
    <property type="expression patterns" value="baseline and differential"/>
</dbReference>
<dbReference type="GO" id="GO:0030424">
    <property type="term" value="C:axon"/>
    <property type="evidence" value="ECO:0000250"/>
    <property type="project" value="ARUK-UCL"/>
</dbReference>
<dbReference type="GO" id="GO:0005737">
    <property type="term" value="C:cytoplasm"/>
    <property type="evidence" value="ECO:0000314"/>
    <property type="project" value="ARUK-UCL"/>
</dbReference>
<dbReference type="GO" id="GO:0031410">
    <property type="term" value="C:cytoplasmic vesicle"/>
    <property type="evidence" value="ECO:0000314"/>
    <property type="project" value="UniProtKB"/>
</dbReference>
<dbReference type="GO" id="GO:0005829">
    <property type="term" value="C:cytosol"/>
    <property type="evidence" value="ECO:0000318"/>
    <property type="project" value="GO_Central"/>
</dbReference>
<dbReference type="GO" id="GO:0030425">
    <property type="term" value="C:dendrite"/>
    <property type="evidence" value="ECO:0000250"/>
    <property type="project" value="ARUK-UCL"/>
</dbReference>
<dbReference type="GO" id="GO:0005769">
    <property type="term" value="C:early endosome"/>
    <property type="evidence" value="ECO:0000314"/>
    <property type="project" value="UniProtKB"/>
</dbReference>
<dbReference type="GO" id="GO:0030139">
    <property type="term" value="C:endocytic vesicle"/>
    <property type="evidence" value="ECO:0000314"/>
    <property type="project" value="ARUK-UCL"/>
</dbReference>
<dbReference type="GO" id="GO:0043025">
    <property type="term" value="C:neuronal cell body"/>
    <property type="evidence" value="ECO:0000250"/>
    <property type="project" value="ARUK-UCL"/>
</dbReference>
<dbReference type="GO" id="GO:0031982">
    <property type="term" value="C:vesicle"/>
    <property type="evidence" value="ECO:0000314"/>
    <property type="project" value="ARUK-UCL"/>
</dbReference>
<dbReference type="GO" id="GO:0005096">
    <property type="term" value="F:GTPase activator activity"/>
    <property type="evidence" value="ECO:0007669"/>
    <property type="project" value="UniProtKB-KW"/>
</dbReference>
<dbReference type="GO" id="GO:0005085">
    <property type="term" value="F:guanyl-nucleotide exchange factor activity"/>
    <property type="evidence" value="ECO:0000315"/>
    <property type="project" value="UniProtKB"/>
</dbReference>
<dbReference type="GO" id="GO:0031267">
    <property type="term" value="F:small GTPase binding"/>
    <property type="evidence" value="ECO:0000314"/>
    <property type="project" value="UniProtKB"/>
</dbReference>
<dbReference type="GO" id="GO:0006897">
    <property type="term" value="P:endocytosis"/>
    <property type="evidence" value="ECO:0000303"/>
    <property type="project" value="UniProtKB"/>
</dbReference>
<dbReference type="GO" id="GO:0060755">
    <property type="term" value="P:negative regulation of mast cell chemotaxis"/>
    <property type="evidence" value="ECO:0000315"/>
    <property type="project" value="ARUK-UCL"/>
</dbReference>
<dbReference type="GO" id="GO:0002091">
    <property type="term" value="P:negative regulation of receptor internalization"/>
    <property type="evidence" value="ECO:0000315"/>
    <property type="project" value="ARUK-UCL"/>
</dbReference>
<dbReference type="GO" id="GO:0097494">
    <property type="term" value="P:regulation of vesicle size"/>
    <property type="evidence" value="ECO:0000314"/>
    <property type="project" value="ARUK-UCL"/>
</dbReference>
<dbReference type="GO" id="GO:0007165">
    <property type="term" value="P:signal transduction"/>
    <property type="evidence" value="ECO:0007669"/>
    <property type="project" value="InterPro"/>
</dbReference>
<dbReference type="CDD" id="cd16130">
    <property type="entry name" value="RA_Rin3"/>
    <property type="match status" value="1"/>
</dbReference>
<dbReference type="CDD" id="cd10395">
    <property type="entry name" value="SH2_RIN3"/>
    <property type="match status" value="1"/>
</dbReference>
<dbReference type="FunFam" id="1.20.1050.80:FF:000002">
    <property type="entry name" value="Ras and Rab interactor 2"/>
    <property type="match status" value="1"/>
</dbReference>
<dbReference type="FunFam" id="3.30.505.10:FF:000052">
    <property type="entry name" value="Ras and Rab interactor 2"/>
    <property type="match status" value="1"/>
</dbReference>
<dbReference type="Gene3D" id="3.30.505.10">
    <property type="entry name" value="SH2 domain"/>
    <property type="match status" value="1"/>
</dbReference>
<dbReference type="Gene3D" id="1.20.1050.80">
    <property type="entry name" value="VPS9 domain"/>
    <property type="match status" value="1"/>
</dbReference>
<dbReference type="InterPro" id="IPR000159">
    <property type="entry name" value="RA_dom"/>
</dbReference>
<dbReference type="InterPro" id="IPR035869">
    <property type="entry name" value="RIN3_SH2"/>
</dbReference>
<dbReference type="InterPro" id="IPR000980">
    <property type="entry name" value="SH2"/>
</dbReference>
<dbReference type="InterPro" id="IPR036860">
    <property type="entry name" value="SH2_dom_sf"/>
</dbReference>
<dbReference type="InterPro" id="IPR003123">
    <property type="entry name" value="VPS9"/>
</dbReference>
<dbReference type="InterPro" id="IPR045046">
    <property type="entry name" value="Vps9-like"/>
</dbReference>
<dbReference type="InterPro" id="IPR037191">
    <property type="entry name" value="VPS9_dom_sf"/>
</dbReference>
<dbReference type="PANTHER" id="PTHR23101">
    <property type="entry name" value="RAB GDP/GTP EXCHANGE FACTOR"/>
    <property type="match status" value="1"/>
</dbReference>
<dbReference type="PANTHER" id="PTHR23101:SF58">
    <property type="entry name" value="RAS AND RAB INTERACTOR 3"/>
    <property type="match status" value="1"/>
</dbReference>
<dbReference type="Pfam" id="PF23268">
    <property type="entry name" value="RIN1"/>
    <property type="match status" value="1"/>
</dbReference>
<dbReference type="Pfam" id="PF02204">
    <property type="entry name" value="VPS9"/>
    <property type="match status" value="1"/>
</dbReference>
<dbReference type="SMART" id="SM00252">
    <property type="entry name" value="SH2"/>
    <property type="match status" value="1"/>
</dbReference>
<dbReference type="SMART" id="SM00167">
    <property type="entry name" value="VPS9"/>
    <property type="match status" value="1"/>
</dbReference>
<dbReference type="SUPFAM" id="SSF55550">
    <property type="entry name" value="SH2 domain"/>
    <property type="match status" value="1"/>
</dbReference>
<dbReference type="SUPFAM" id="SSF109993">
    <property type="entry name" value="VPS9 domain"/>
    <property type="match status" value="1"/>
</dbReference>
<dbReference type="PROSITE" id="PS50200">
    <property type="entry name" value="RA"/>
    <property type="match status" value="1"/>
</dbReference>
<dbReference type="PROSITE" id="PS50001">
    <property type="entry name" value="SH2"/>
    <property type="match status" value="1"/>
</dbReference>
<dbReference type="PROSITE" id="PS51205">
    <property type="entry name" value="VPS9"/>
    <property type="match status" value="1"/>
</dbReference>
<feature type="chain" id="PRO_0000191322" description="Ras and Rab interactor 3">
    <location>
        <begin position="1"/>
        <end position="985"/>
    </location>
</feature>
<feature type="domain" description="SH2" evidence="2">
    <location>
        <begin position="63"/>
        <end position="158"/>
    </location>
</feature>
<feature type="domain" description="VPS9" evidence="3">
    <location>
        <begin position="703"/>
        <end position="846"/>
    </location>
</feature>
<feature type="domain" description="Ras-associating" evidence="1">
    <location>
        <begin position="877"/>
        <end position="963"/>
    </location>
</feature>
<feature type="region of interest" description="Disordered" evidence="4">
    <location>
        <begin position="1"/>
        <end position="24"/>
    </location>
</feature>
<feature type="region of interest" description="Disordered" evidence="4">
    <location>
        <begin position="183"/>
        <end position="202"/>
    </location>
</feature>
<feature type="region of interest" description="Disordered" evidence="4">
    <location>
        <begin position="251"/>
        <end position="293"/>
    </location>
</feature>
<feature type="region of interest" description="Disordered" evidence="4">
    <location>
        <begin position="315"/>
        <end position="531"/>
    </location>
</feature>
<feature type="region of interest" description="Interaction with RAB5B" evidence="5">
    <location>
        <begin position="587"/>
        <end position="732"/>
    </location>
</feature>
<feature type="compositionally biased region" description="Basic and acidic residues" evidence="4">
    <location>
        <begin position="189"/>
        <end position="201"/>
    </location>
</feature>
<feature type="compositionally biased region" description="Pro residues" evidence="4">
    <location>
        <begin position="278"/>
        <end position="288"/>
    </location>
</feature>
<feature type="compositionally biased region" description="Pro residues" evidence="4">
    <location>
        <begin position="315"/>
        <end position="336"/>
    </location>
</feature>
<feature type="compositionally biased region" description="Basic and acidic residues" evidence="4">
    <location>
        <begin position="424"/>
        <end position="442"/>
    </location>
</feature>
<feature type="splice variant" id="VSP_007587" description="In isoform 4." evidence="10">
    <original>DFICVSYLEPEQQARTLASRADTQAQ</original>
    <variation>VRPESGRGPVGPCPRHHPCCLLAKEP</variation>
    <location>
        <begin position="878"/>
        <end position="903"/>
    </location>
</feature>
<feature type="splice variant" id="VSP_007588" description="In isoform 4." evidence="10">
    <location>
        <begin position="904"/>
        <end position="985"/>
    </location>
</feature>
<feature type="sequence variant" id="VAR_046645" description="In dbSNP:rs2274542.">
    <original>E</original>
    <variation>K</variation>
    <location>
        <position position="111"/>
    </location>
</feature>
<feature type="sequence variant" id="VAR_059960" description="In dbSNP:rs3829947.">
    <original>H</original>
    <variation>L</variation>
    <location>
        <position position="215"/>
    </location>
</feature>
<feature type="sequence variant" id="VAR_046646" description="In dbSNP:rs3829947.">
    <original>H</original>
    <variation>P</variation>
    <location>
        <position position="215"/>
    </location>
</feature>
<feature type="sequence variant" id="VAR_059961" description="In dbSNP:rs3829947.">
    <original>H</original>
    <variation>R</variation>
    <location>
        <position position="215"/>
    </location>
</feature>
<feature type="sequence variant" id="VAR_052946" description="In dbSNP:rs3742717.">
    <original>T</original>
    <variation>I</variation>
    <location>
        <position position="425"/>
    </location>
</feature>
<feature type="sequence variant" id="VAR_046647" description="In dbSNP:rs3742717." evidence="6">
    <original>T</original>
    <variation>M</variation>
    <location>
        <position position="425"/>
    </location>
</feature>
<feature type="sequence variant" id="VAR_046648" description="In dbSNP:rs12434929.">
    <original>G</original>
    <variation>A</variation>
    <location>
        <position position="613"/>
    </location>
</feature>
<feature type="mutagenesis site" description="Strongly reduced guanine nucleotide exchange factor activity toward RAB31; when associated with A-828." evidence="8">
    <original>Y</original>
    <variation>A</variation>
    <location>
        <position position="825"/>
    </location>
</feature>
<feature type="mutagenesis site" description="Strongly reduced guanine nucleotide exchange factor activity toward RAB31; when associated with A-825." evidence="8">
    <original>T</original>
    <variation>A</variation>
    <location>
        <position position="828"/>
    </location>
</feature>
<feature type="sequence conflict" description="In Ref. 4; AAH25248." evidence="11" ref="4">
    <original>I</original>
    <variation>F</variation>
    <location>
        <position position="742"/>
    </location>
</feature>
<feature type="sequence conflict" description="In Ref. 3; BAB15357 and 4; AAH25248." evidence="11" ref="3 4">
    <location>
        <position position="965"/>
    </location>
</feature>
<protein>
    <recommendedName>
        <fullName>Ras and Rab interactor 3</fullName>
    </recommendedName>
    <alternativeName>
        <fullName>Ras interaction/interference protein 3</fullName>
    </alternativeName>
</protein>
<accession>Q8TB24</accession>
<accession>Q76LB3</accession>
<accession>Q8NF30</accession>
<accession>Q8TEE8</accession>
<accession>Q8WYP4</accession>
<accession>Q9H6A5</accession>
<accession>Q9HAG1</accession>
<comment type="function">
    <text evidence="5 8">Ras effector protein that functions as a guanine nucleotide exchange (GEF) for RAB5B and RAB31, by exchanging bound GDP for free GTP. Required for normal RAB31 function.</text>
</comment>
<comment type="subunit">
    <text evidence="5 8 9">Interacts with CD2AP, RAB5B, RAB31 and BIN1.</text>
</comment>
<comment type="interaction">
    <interactant intactId="EBI-1570523">
        <id>Q8TB24</id>
    </interactant>
    <interactant intactId="EBI-719094">
        <id>O00499</id>
        <label>BIN1</label>
    </interactant>
    <organismsDiffer>false</organismsDiffer>
    <experiments>4</experiments>
</comment>
<comment type="interaction">
    <interactant intactId="EBI-1570523">
        <id>Q8TB24</id>
    </interactant>
    <interactant intactId="EBI-298152">
        <id>Q9Y5K6</id>
        <label>CD2AP</label>
    </interactant>
    <organismsDiffer>false</organismsDiffer>
    <experiments>3</experiments>
</comment>
<comment type="interaction">
    <interactant intactId="EBI-1570523">
        <id>Q8TB24</id>
    </interactant>
    <interactant intactId="EBI-886">
        <id>P46108</id>
        <label>CRK</label>
    </interactant>
    <organismsDiffer>false</organismsDiffer>
    <experiments>2</experiments>
</comment>
<comment type="interaction">
    <interactant intactId="EBI-1570523">
        <id>Q8TB24</id>
    </interactant>
    <interactant intactId="EBI-389883">
        <id>P16333</id>
        <label>NCK1</label>
    </interactant>
    <organismsDiffer>false</organismsDiffer>
    <experiments>2</experiments>
</comment>
<comment type="interaction">
    <interactant intactId="EBI-1570523">
        <id>Q8TB24</id>
    </interactant>
    <interactant intactId="EBI-79387">
        <id>P19174</id>
        <label>PLCG1</label>
    </interactant>
    <organismsDiffer>false</organismsDiffer>
    <experiments>3</experiments>
</comment>
<comment type="subcellular location">
    <subcellularLocation>
        <location evidence="7 8">Cytoplasm</location>
    </subcellularLocation>
    <subcellularLocation>
        <location evidence="5 7 8">Cytoplasmic vesicle</location>
    </subcellularLocation>
    <subcellularLocation>
        <location evidence="7">Early endosome</location>
    </subcellularLocation>
    <text evidence="7">Activation of tyrosine phosphorylation signaling induces translocation to cytoplasmic vesicles.</text>
</comment>
<comment type="alternative products">
    <event type="alternative splicing"/>
    <isoform>
        <id>Q8TB24-1</id>
        <name>1</name>
        <sequence type="displayed"/>
    </isoform>
    <isoform>
        <id>Q8TB24-4</id>
        <name>4</name>
        <sequence type="described" ref="VSP_007587 VSP_007588"/>
    </isoform>
</comment>
<comment type="tissue specificity">
    <text evidence="5">Widely expressed.</text>
</comment>
<comment type="similarity">
    <text evidence="11">Belongs to the RIN (Ras interaction/interference) family.</text>
</comment>
<comment type="sequence caution" evidence="11">
    <conflict type="miscellaneous discrepancy">
        <sequence resource="EMBL-CDS" id="BAB13888"/>
    </conflict>
    <text>Aberrant splicing.</text>
</comment>
<comment type="sequence caution" evidence="11">
    <conflict type="erroneous initiation">
        <sequence resource="EMBL-CDS" id="BAB15357"/>
    </conflict>
    <text>Truncated N-terminus.</text>
</comment>
<comment type="sequence caution" evidence="11">
    <conflict type="miscellaneous discrepancy">
        <sequence resource="EMBL-CDS" id="BAC03432"/>
    </conflict>
    <text>Intron retention.</text>
</comment>
<gene>
    <name type="primary">RIN3</name>
</gene>
<proteinExistence type="evidence at protein level"/>
<evidence type="ECO:0000255" key="1">
    <source>
        <dbReference type="PROSITE-ProRule" id="PRU00166"/>
    </source>
</evidence>
<evidence type="ECO:0000255" key="2">
    <source>
        <dbReference type="PROSITE-ProRule" id="PRU00191"/>
    </source>
</evidence>
<evidence type="ECO:0000255" key="3">
    <source>
        <dbReference type="PROSITE-ProRule" id="PRU00550"/>
    </source>
</evidence>
<evidence type="ECO:0000256" key="4">
    <source>
        <dbReference type="SAM" id="MobiDB-lite"/>
    </source>
</evidence>
<evidence type="ECO:0000269" key="5">
    <source>
    </source>
</evidence>
<evidence type="ECO:0000269" key="6">
    <source>
    </source>
</evidence>
<evidence type="ECO:0000269" key="7">
    <source>
    </source>
</evidence>
<evidence type="ECO:0000269" key="8">
    <source>
    </source>
</evidence>
<evidence type="ECO:0000269" key="9">
    <source ref="8"/>
</evidence>
<evidence type="ECO:0000303" key="10">
    <source>
    </source>
</evidence>
<evidence type="ECO:0000305" key="11"/>
<reference key="1">
    <citation type="journal article" date="2003" name="J. Cell Sci.">
        <title>RIN3: a novel Rab5 GEF interacting with amphiphysin II involved in the early endocytic pathway.</title>
        <authorList>
            <person name="Kajiho H."/>
            <person name="Saito K."/>
            <person name="Tsujita K."/>
            <person name="Kontani K."/>
            <person name="Araki Y."/>
            <person name="Kurosu H."/>
            <person name="Katada T."/>
        </authorList>
    </citation>
    <scope>NUCLEOTIDE SEQUENCE [MRNA] (ISOFORM 1)</scope>
    <scope>FUNCTION</scope>
    <scope>INTERACTION WITH BIN1 AND RAB5B</scope>
    <scope>SUBCELLULAR LOCATION</scope>
    <scope>TISSUE SPECIFICITY</scope>
</reference>
<reference key="2">
    <citation type="journal article" date="2003" name="Nature">
        <title>The DNA sequence and analysis of human chromosome 14.</title>
        <authorList>
            <person name="Heilig R."/>
            <person name="Eckenberg R."/>
            <person name="Petit J.-L."/>
            <person name="Fonknechten N."/>
            <person name="Da Silva C."/>
            <person name="Cattolico L."/>
            <person name="Levy M."/>
            <person name="Barbe V."/>
            <person name="De Berardinis V."/>
            <person name="Ureta-Vidal A."/>
            <person name="Pelletier E."/>
            <person name="Vico V."/>
            <person name="Anthouard V."/>
            <person name="Rowen L."/>
            <person name="Madan A."/>
            <person name="Qin S."/>
            <person name="Sun H."/>
            <person name="Du H."/>
            <person name="Pepin K."/>
            <person name="Artiguenave F."/>
            <person name="Robert C."/>
            <person name="Cruaud C."/>
            <person name="Bruels T."/>
            <person name="Jaillon O."/>
            <person name="Friedlander L."/>
            <person name="Samson G."/>
            <person name="Brottier P."/>
            <person name="Cure S."/>
            <person name="Segurens B."/>
            <person name="Aniere F."/>
            <person name="Samain S."/>
            <person name="Crespeau H."/>
            <person name="Abbasi N."/>
            <person name="Aiach N."/>
            <person name="Boscus D."/>
            <person name="Dickhoff R."/>
            <person name="Dors M."/>
            <person name="Dubois I."/>
            <person name="Friedman C."/>
            <person name="Gouyvenoux M."/>
            <person name="James R."/>
            <person name="Madan A."/>
            <person name="Mairey-Estrada B."/>
            <person name="Mangenot S."/>
            <person name="Martins N."/>
            <person name="Menard M."/>
            <person name="Oztas S."/>
            <person name="Ratcliffe A."/>
            <person name="Shaffer T."/>
            <person name="Trask B."/>
            <person name="Vacherie B."/>
            <person name="Bellemere C."/>
            <person name="Belser C."/>
            <person name="Besnard-Gonnet M."/>
            <person name="Bartol-Mavel D."/>
            <person name="Boutard M."/>
            <person name="Briez-Silla S."/>
            <person name="Combette S."/>
            <person name="Dufosse-Laurent V."/>
            <person name="Ferron C."/>
            <person name="Lechaplais C."/>
            <person name="Louesse C."/>
            <person name="Muselet D."/>
            <person name="Magdelenat G."/>
            <person name="Pateau E."/>
            <person name="Petit E."/>
            <person name="Sirvain-Trukniewicz P."/>
            <person name="Trybou A."/>
            <person name="Vega-Czarny N."/>
            <person name="Bataille E."/>
            <person name="Bluet E."/>
            <person name="Bordelais I."/>
            <person name="Dubois M."/>
            <person name="Dumont C."/>
            <person name="Guerin T."/>
            <person name="Haffray S."/>
            <person name="Hammadi R."/>
            <person name="Muanga J."/>
            <person name="Pellouin V."/>
            <person name="Robert D."/>
            <person name="Wunderle E."/>
            <person name="Gauguet G."/>
            <person name="Roy A."/>
            <person name="Sainte-Marthe L."/>
            <person name="Verdier J."/>
            <person name="Verdier-Discala C."/>
            <person name="Hillier L.W."/>
            <person name="Fulton L."/>
            <person name="McPherson J."/>
            <person name="Matsuda F."/>
            <person name="Wilson R."/>
            <person name="Scarpelli C."/>
            <person name="Gyapay G."/>
            <person name="Wincker P."/>
            <person name="Saurin W."/>
            <person name="Quetier F."/>
            <person name="Waterston R."/>
            <person name="Hood L."/>
            <person name="Weissenbach J."/>
        </authorList>
    </citation>
    <scope>NUCLEOTIDE SEQUENCE [LARGE SCALE GENOMIC DNA]</scope>
</reference>
<reference key="3">
    <citation type="journal article" date="2004" name="Nat. Genet.">
        <title>Complete sequencing and characterization of 21,243 full-length human cDNAs.</title>
        <authorList>
            <person name="Ota T."/>
            <person name="Suzuki Y."/>
            <person name="Nishikawa T."/>
            <person name="Otsuki T."/>
            <person name="Sugiyama T."/>
            <person name="Irie R."/>
            <person name="Wakamatsu A."/>
            <person name="Hayashi K."/>
            <person name="Sato H."/>
            <person name="Nagai K."/>
            <person name="Kimura K."/>
            <person name="Makita H."/>
            <person name="Sekine M."/>
            <person name="Obayashi M."/>
            <person name="Nishi T."/>
            <person name="Shibahara T."/>
            <person name="Tanaka T."/>
            <person name="Ishii S."/>
            <person name="Yamamoto J."/>
            <person name="Saito K."/>
            <person name="Kawai Y."/>
            <person name="Isono Y."/>
            <person name="Nakamura Y."/>
            <person name="Nagahari K."/>
            <person name="Murakami K."/>
            <person name="Yasuda T."/>
            <person name="Iwayanagi T."/>
            <person name="Wagatsuma M."/>
            <person name="Shiratori A."/>
            <person name="Sudo H."/>
            <person name="Hosoiri T."/>
            <person name="Kaku Y."/>
            <person name="Kodaira H."/>
            <person name="Kondo H."/>
            <person name="Sugawara M."/>
            <person name="Takahashi M."/>
            <person name="Kanda K."/>
            <person name="Yokoi T."/>
            <person name="Furuya T."/>
            <person name="Kikkawa E."/>
            <person name="Omura Y."/>
            <person name="Abe K."/>
            <person name="Kamihara K."/>
            <person name="Katsuta N."/>
            <person name="Sato K."/>
            <person name="Tanikawa M."/>
            <person name="Yamazaki M."/>
            <person name="Ninomiya K."/>
            <person name="Ishibashi T."/>
            <person name="Yamashita H."/>
            <person name="Murakawa K."/>
            <person name="Fujimori K."/>
            <person name="Tanai H."/>
            <person name="Kimata M."/>
            <person name="Watanabe M."/>
            <person name="Hiraoka S."/>
            <person name="Chiba Y."/>
            <person name="Ishida S."/>
            <person name="Ono Y."/>
            <person name="Takiguchi S."/>
            <person name="Watanabe S."/>
            <person name="Yosida M."/>
            <person name="Hotuta T."/>
            <person name="Kusano J."/>
            <person name="Kanehori K."/>
            <person name="Takahashi-Fujii A."/>
            <person name="Hara H."/>
            <person name="Tanase T.-O."/>
            <person name="Nomura Y."/>
            <person name="Togiya S."/>
            <person name="Komai F."/>
            <person name="Hara R."/>
            <person name="Takeuchi K."/>
            <person name="Arita M."/>
            <person name="Imose N."/>
            <person name="Musashino K."/>
            <person name="Yuuki H."/>
            <person name="Oshima A."/>
            <person name="Sasaki N."/>
            <person name="Aotsuka S."/>
            <person name="Yoshikawa Y."/>
            <person name="Matsunawa H."/>
            <person name="Ichihara T."/>
            <person name="Shiohata N."/>
            <person name="Sano S."/>
            <person name="Moriya S."/>
            <person name="Momiyama H."/>
            <person name="Satoh N."/>
            <person name="Takami S."/>
            <person name="Terashima Y."/>
            <person name="Suzuki O."/>
            <person name="Nakagawa S."/>
            <person name="Senoh A."/>
            <person name="Mizoguchi H."/>
            <person name="Goto Y."/>
            <person name="Shimizu F."/>
            <person name="Wakebe H."/>
            <person name="Hishigaki H."/>
            <person name="Watanabe T."/>
            <person name="Sugiyama A."/>
            <person name="Takemoto M."/>
            <person name="Kawakami B."/>
            <person name="Yamazaki M."/>
            <person name="Watanabe K."/>
            <person name="Kumagai A."/>
            <person name="Itakura S."/>
            <person name="Fukuzumi Y."/>
            <person name="Fujimori Y."/>
            <person name="Komiyama M."/>
            <person name="Tashiro H."/>
            <person name="Tanigami A."/>
            <person name="Fujiwara T."/>
            <person name="Ono T."/>
            <person name="Yamada K."/>
            <person name="Fujii Y."/>
            <person name="Ozaki K."/>
            <person name="Hirao M."/>
            <person name="Ohmori Y."/>
            <person name="Kawabata A."/>
            <person name="Hikiji T."/>
            <person name="Kobatake N."/>
            <person name="Inagaki H."/>
            <person name="Ikema Y."/>
            <person name="Okamoto S."/>
            <person name="Okitani R."/>
            <person name="Kawakami T."/>
            <person name="Noguchi S."/>
            <person name="Itoh T."/>
            <person name="Shigeta K."/>
            <person name="Senba T."/>
            <person name="Matsumura K."/>
            <person name="Nakajima Y."/>
            <person name="Mizuno T."/>
            <person name="Morinaga M."/>
            <person name="Sasaki M."/>
            <person name="Togashi T."/>
            <person name="Oyama M."/>
            <person name="Hata H."/>
            <person name="Watanabe M."/>
            <person name="Komatsu T."/>
            <person name="Mizushima-Sugano J."/>
            <person name="Satoh T."/>
            <person name="Shirai Y."/>
            <person name="Takahashi Y."/>
            <person name="Nakagawa K."/>
            <person name="Okumura K."/>
            <person name="Nagase T."/>
            <person name="Nomura N."/>
            <person name="Kikuchi H."/>
            <person name="Masuho Y."/>
            <person name="Yamashita R."/>
            <person name="Nakai K."/>
            <person name="Yada T."/>
            <person name="Nakamura Y."/>
            <person name="Ohara O."/>
            <person name="Isogai T."/>
            <person name="Sugano S."/>
        </authorList>
    </citation>
    <scope>NUCLEOTIDE SEQUENCE [LARGE SCALE MRNA] OF 1-167 AND 405-985 (ISOFORM 1)</scope>
    <scope>NUCLEOTIDE SEQUENCE [LARGE SCALE MRNA] OF 485-985 (ISOFORM 4)</scope>
    <scope>VARIANT MET-425</scope>
    <source>
        <tissue>Embryo</tissue>
    </source>
</reference>
<reference key="4">
    <citation type="journal article" date="2004" name="Genome Res.">
        <title>The status, quality, and expansion of the NIH full-length cDNA project: the Mammalian Gene Collection (MGC).</title>
        <authorList>
            <consortium name="The MGC Project Team"/>
        </authorList>
    </citation>
    <scope>NUCLEOTIDE SEQUENCE [LARGE SCALE MRNA] OF 328-985 (ISOFORM 1)</scope>
    <source>
        <tissue>Eye</tissue>
    </source>
</reference>
<reference key="5">
    <citation type="journal article" date="2002" name="J. Biol. Chem.">
        <title>A novel binding protein composed of homophilic tetramer exhibits unique properties for the small GTPase Rab5.</title>
        <authorList>
            <person name="Saito K."/>
            <person name="Murai J."/>
            <person name="Kajiho H."/>
            <person name="Kontani K."/>
            <person name="Kurosu H."/>
            <person name="Katada T."/>
        </authorList>
    </citation>
    <scope>NUCLEOTIDE SEQUENCE [MRNA] OF 435-959 (ISOFORM 1)</scope>
    <source>
        <tissue>Leukocyte</tissue>
        <tissue>Spleen</tissue>
    </source>
</reference>
<reference key="6">
    <citation type="journal article" date="2008" name="Biochem. Biophys. Res. Commun.">
        <title>Tyr-phosphorylation signals translocate RIN3, the small GTPase Rab5-GEF, to early endocytic vesicles.</title>
        <authorList>
            <person name="Yoshikawa M."/>
            <person name="Kajiho H."/>
            <person name="Sakurai K."/>
            <person name="Minoda T."/>
            <person name="Nakagawa S."/>
            <person name="Kontani K."/>
            <person name="Katada T."/>
        </authorList>
    </citation>
    <scope>SUBCELLULAR LOCATION</scope>
    <scope>PHOSPHORYLATION</scope>
</reference>
<reference key="7">
    <citation type="journal article" date="2011" name="J. Biol. Chem.">
        <title>Characterization of RIN3 as a guanine nucleotide exchange factor for the Rab5 subfamily GTPase Rab31.</title>
        <authorList>
            <person name="Kajiho H."/>
            <person name="Sakurai K."/>
            <person name="Minoda T."/>
            <person name="Yoshikawa M."/>
            <person name="Nakagawa S."/>
            <person name="Fukushima S."/>
            <person name="Kontani K."/>
            <person name="Katada T."/>
        </authorList>
    </citation>
    <scope>FUNCTION</scope>
    <scope>SUBCELLULAR LOCATION</scope>
    <scope>MUTAGENESIS OF TYR-825 AND THR-828</scope>
    <scope>INTERACTION WITH RAB31</scope>
</reference>
<reference key="8">
    <citation type="submission" date="2011-12" db="PDB data bank">
        <title>Atomic resolution crystal structure of the 2nd SH3 domain from human CD2AP (CMS) in complex with a proline-rich peptide from human RIN3.</title>
        <authorList>
            <consortium name="Structural genomics consortium (SGC)"/>
        </authorList>
    </citation>
    <scope>X-RAY CRYSTALLOGRAPHY (1.11 ANGSTROMS) OF 452-467 IN COMPLEX WITH CD2AP</scope>
    <scope>INTERACTION WITH CD2AP</scope>
</reference>
<name>RIN3_HUMAN</name>